<accession>Q3SZC2</accession>
<keyword id="KW-0002">3D-structure</keyword>
<keyword id="KW-0007">Acetylation</keyword>
<keyword id="KW-0963">Cytoplasm</keyword>
<keyword id="KW-0378">Hydrolase</keyword>
<keyword id="KW-0391">Immunity</keyword>
<keyword id="KW-0539">Nucleus</keyword>
<keyword id="KW-0645">Protease</keyword>
<keyword id="KW-0647">Proteasome</keyword>
<keyword id="KW-1185">Reference proteome</keyword>
<keyword id="KW-0888">Threonine protease</keyword>
<keyword id="KW-0865">Zymogen</keyword>
<protein>
    <recommendedName>
        <fullName>Proteasome subunit beta type-9</fullName>
        <ecNumber>3.4.25.1</ecNumber>
    </recommendedName>
    <alternativeName>
        <fullName>Proteasome subunit beta-1i</fullName>
    </alternativeName>
</protein>
<sequence length="219" mass="23404">MLRTGAPNGDLPRAGEVHTGTTIMAVEFDGGVVVGSDSRVSAGEAVVNRVFDKLSPLHQHIYCALSGSAADAQAIADMAAYQLELHGMELEEPPLVLAAANVVRNITYKYREDLSAHLMVAGWDQREGGQVYGTMSGMLIRQPFAIGGSGSTYIYGYVDAAYKPGMSPEECRRFTTNAIALAMKRDGSSGGVIYLATITGAGVDHRVILGDELPRFYDE</sequence>
<dbReference type="EC" id="3.4.25.1"/>
<dbReference type="EMBL" id="AY957499">
    <property type="protein sequence ID" value="AAY34699.1"/>
    <property type="molecule type" value="Genomic_DNA"/>
</dbReference>
<dbReference type="EMBL" id="BC102963">
    <property type="protein sequence ID" value="AAI02964.1"/>
    <property type="molecule type" value="mRNA"/>
</dbReference>
<dbReference type="RefSeq" id="NP_001029560.1">
    <property type="nucleotide sequence ID" value="NM_001034388.2"/>
</dbReference>
<dbReference type="PDB" id="7DR6">
    <property type="method" value="EM"/>
    <property type="resolution" value="4.10 A"/>
    <property type="chains" value="W/Z=1-219"/>
</dbReference>
<dbReference type="PDB" id="7DR7">
    <property type="method" value="EM"/>
    <property type="resolution" value="3.30 A"/>
    <property type="chains" value="W/Z=1-219"/>
</dbReference>
<dbReference type="PDB" id="7DRW">
    <property type="method" value="EM"/>
    <property type="resolution" value="4.20 A"/>
    <property type="chains" value="W/Z=1-219"/>
</dbReference>
<dbReference type="PDBsum" id="7DR6"/>
<dbReference type="PDBsum" id="7DR7"/>
<dbReference type="PDBsum" id="7DRW"/>
<dbReference type="EMDB" id="EMD-30824"/>
<dbReference type="EMDB" id="EMD-30825"/>
<dbReference type="EMDB" id="EMD-30828"/>
<dbReference type="SMR" id="Q3SZC2"/>
<dbReference type="FunCoup" id="Q3SZC2">
    <property type="interactions" value="1660"/>
</dbReference>
<dbReference type="IntAct" id="Q3SZC2">
    <property type="interactions" value="1"/>
</dbReference>
<dbReference type="STRING" id="9913.ENSBTAP00000011789"/>
<dbReference type="MEROPS" id="T01.013"/>
<dbReference type="PaxDb" id="9913-ENSBTAP00000011789"/>
<dbReference type="Ensembl" id="ENSBTAT00000011789.4">
    <property type="protein sequence ID" value="ENSBTAP00000011789.3"/>
    <property type="gene ID" value="ENSBTAG00000008954.5"/>
</dbReference>
<dbReference type="GeneID" id="510593"/>
<dbReference type="KEGG" id="bta:510593"/>
<dbReference type="CTD" id="5698"/>
<dbReference type="VEuPathDB" id="HostDB:ENSBTAG00000008954"/>
<dbReference type="VGNC" id="VGNC:33453">
    <property type="gene designation" value="PSMB9"/>
</dbReference>
<dbReference type="eggNOG" id="KOG0174">
    <property type="taxonomic scope" value="Eukaryota"/>
</dbReference>
<dbReference type="GeneTree" id="ENSGT00940000159897"/>
<dbReference type="HOGENOM" id="CLU_035750_5_2_1"/>
<dbReference type="InParanoid" id="Q3SZC2"/>
<dbReference type="OMA" id="PWAGEVH"/>
<dbReference type="OrthoDB" id="7854943at2759"/>
<dbReference type="TreeFam" id="TF106221"/>
<dbReference type="Reactome" id="R-BTA-9907900">
    <property type="pathway name" value="Proteasome assembly"/>
</dbReference>
<dbReference type="Proteomes" id="UP000009136">
    <property type="component" value="Chromosome 23"/>
</dbReference>
<dbReference type="Bgee" id="ENSBTAG00000008954">
    <property type="expression patterns" value="Expressed in blood and 106 other cell types or tissues"/>
</dbReference>
<dbReference type="GO" id="GO:0005829">
    <property type="term" value="C:cytosol"/>
    <property type="evidence" value="ECO:0000318"/>
    <property type="project" value="GO_Central"/>
</dbReference>
<dbReference type="GO" id="GO:0005634">
    <property type="term" value="C:nucleus"/>
    <property type="evidence" value="ECO:0000318"/>
    <property type="project" value="GO_Central"/>
</dbReference>
<dbReference type="GO" id="GO:0005839">
    <property type="term" value="C:proteasome core complex"/>
    <property type="evidence" value="ECO:0000250"/>
    <property type="project" value="UniProtKB"/>
</dbReference>
<dbReference type="GO" id="GO:0019774">
    <property type="term" value="C:proteasome core complex, beta-subunit complex"/>
    <property type="evidence" value="ECO:0000250"/>
    <property type="project" value="UniProtKB"/>
</dbReference>
<dbReference type="GO" id="GO:1990111">
    <property type="term" value="C:spermatoproteasome complex"/>
    <property type="evidence" value="ECO:0000250"/>
    <property type="project" value="UniProtKB"/>
</dbReference>
<dbReference type="GO" id="GO:0004175">
    <property type="term" value="F:endopeptidase activity"/>
    <property type="evidence" value="ECO:0000318"/>
    <property type="project" value="GO_Central"/>
</dbReference>
<dbReference type="GO" id="GO:0004298">
    <property type="term" value="F:threonine-type endopeptidase activity"/>
    <property type="evidence" value="ECO:0007669"/>
    <property type="project" value="UniProtKB-KW"/>
</dbReference>
<dbReference type="GO" id="GO:0002376">
    <property type="term" value="P:immune system process"/>
    <property type="evidence" value="ECO:0007669"/>
    <property type="project" value="UniProtKB-KW"/>
</dbReference>
<dbReference type="GO" id="GO:0043161">
    <property type="term" value="P:proteasome-mediated ubiquitin-dependent protein catabolic process"/>
    <property type="evidence" value="ECO:0000318"/>
    <property type="project" value="GO_Central"/>
</dbReference>
<dbReference type="CDD" id="cd03762">
    <property type="entry name" value="proteasome_beta_type_6"/>
    <property type="match status" value="1"/>
</dbReference>
<dbReference type="FunFam" id="3.60.20.10:FF:000010">
    <property type="entry name" value="Proteasome subunit beta type-1"/>
    <property type="match status" value="1"/>
</dbReference>
<dbReference type="Gene3D" id="3.60.20.10">
    <property type="entry name" value="Glutamine Phosphoribosylpyrophosphate, subunit 1, domain 1"/>
    <property type="match status" value="1"/>
</dbReference>
<dbReference type="InterPro" id="IPR029055">
    <property type="entry name" value="Ntn_hydrolases_N"/>
</dbReference>
<dbReference type="InterPro" id="IPR000243">
    <property type="entry name" value="Pept_T1A_subB"/>
</dbReference>
<dbReference type="InterPro" id="IPR016050">
    <property type="entry name" value="Proteasome_bsu_CS"/>
</dbReference>
<dbReference type="InterPro" id="IPR001353">
    <property type="entry name" value="Proteasome_sua/b"/>
</dbReference>
<dbReference type="InterPro" id="IPR023333">
    <property type="entry name" value="Proteasome_suB-type"/>
</dbReference>
<dbReference type="PANTHER" id="PTHR32194">
    <property type="entry name" value="METALLOPROTEASE TLDD"/>
    <property type="match status" value="1"/>
</dbReference>
<dbReference type="PANTHER" id="PTHR32194:SF12">
    <property type="entry name" value="PROTEASOME SUBUNIT BETA"/>
    <property type="match status" value="1"/>
</dbReference>
<dbReference type="Pfam" id="PF00227">
    <property type="entry name" value="Proteasome"/>
    <property type="match status" value="1"/>
</dbReference>
<dbReference type="PRINTS" id="PR00141">
    <property type="entry name" value="PROTEASOME"/>
</dbReference>
<dbReference type="SUPFAM" id="SSF56235">
    <property type="entry name" value="N-terminal nucleophile aminohydrolases (Ntn hydrolases)"/>
    <property type="match status" value="1"/>
</dbReference>
<dbReference type="PROSITE" id="PS00854">
    <property type="entry name" value="PROTEASOME_BETA_1"/>
    <property type="match status" value="1"/>
</dbReference>
<dbReference type="PROSITE" id="PS51476">
    <property type="entry name" value="PROTEASOME_BETA_2"/>
    <property type="match status" value="1"/>
</dbReference>
<gene>
    <name type="primary">PSMB9</name>
</gene>
<reference key="1">
    <citation type="journal article" date="2006" name="Anim. Genet.">
        <title>Comparative analysis of the bovine MHC class IIb sequence identifies inversion breakpoints and three unexpected genes.</title>
        <authorList>
            <person name="Childers C.P."/>
            <person name="Newkirk H.L."/>
            <person name="Honeycutt D.A."/>
            <person name="Ramlachan N."/>
            <person name="Muzney D.M."/>
            <person name="Sodergren E."/>
            <person name="Gibbs R.A."/>
            <person name="Weinstock G.M."/>
            <person name="Womack J.E."/>
            <person name="Skow L.C."/>
        </authorList>
    </citation>
    <scope>NUCLEOTIDE SEQUENCE [LARGE SCALE GENOMIC DNA]</scope>
</reference>
<reference key="2">
    <citation type="submission" date="2005-08" db="EMBL/GenBank/DDBJ databases">
        <authorList>
            <consortium name="NIH - Mammalian Gene Collection (MGC) project"/>
        </authorList>
    </citation>
    <scope>NUCLEOTIDE SEQUENCE [LARGE SCALE MRNA]</scope>
    <source>
        <strain>Crossbred X Angus</strain>
        <tissue>Ileum</tissue>
    </source>
</reference>
<organism>
    <name type="scientific">Bos taurus</name>
    <name type="common">Bovine</name>
    <dbReference type="NCBI Taxonomy" id="9913"/>
    <lineage>
        <taxon>Eukaryota</taxon>
        <taxon>Metazoa</taxon>
        <taxon>Chordata</taxon>
        <taxon>Craniata</taxon>
        <taxon>Vertebrata</taxon>
        <taxon>Euteleostomi</taxon>
        <taxon>Mammalia</taxon>
        <taxon>Eutheria</taxon>
        <taxon>Laurasiatheria</taxon>
        <taxon>Artiodactyla</taxon>
        <taxon>Ruminantia</taxon>
        <taxon>Pecora</taxon>
        <taxon>Bovidae</taxon>
        <taxon>Bovinae</taxon>
        <taxon>Bos</taxon>
    </lineage>
</organism>
<feature type="propeptide" id="PRO_0000239860" description="Removed in mature form" evidence="1">
    <location>
        <begin position="1"/>
        <end position="20"/>
    </location>
</feature>
<feature type="chain" id="PRO_0000239861" description="Proteasome subunit beta type-9">
    <location>
        <begin position="21"/>
        <end position="219"/>
    </location>
</feature>
<feature type="active site" description="Nucleophile" evidence="1">
    <location>
        <position position="21"/>
    </location>
</feature>
<feature type="site" description="Cleavage; by autolysis" evidence="2">
    <location>
        <begin position="20"/>
        <end position="21"/>
    </location>
</feature>
<feature type="modified residue" description="N6-acetyllysine" evidence="3">
    <location>
        <position position="53"/>
    </location>
</feature>
<feature type="modified residue" description="N6-acetyllysine" evidence="3">
    <location>
        <position position="109"/>
    </location>
</feature>
<feature type="strand" evidence="5">
    <location>
        <begin position="23"/>
        <end position="27"/>
    </location>
</feature>
<feature type="strand" evidence="5">
    <location>
        <begin position="32"/>
        <end position="36"/>
    </location>
</feature>
<feature type="strand" evidence="5">
    <location>
        <begin position="40"/>
        <end position="42"/>
    </location>
</feature>
<feature type="strand" evidence="5">
    <location>
        <begin position="45"/>
        <end position="50"/>
    </location>
</feature>
<feature type="strand" evidence="5">
    <location>
        <begin position="54"/>
        <end position="58"/>
    </location>
</feature>
<feature type="strand" evidence="5">
    <location>
        <begin position="61"/>
        <end position="67"/>
    </location>
</feature>
<feature type="helix" evidence="5">
    <location>
        <begin position="69"/>
        <end position="90"/>
    </location>
</feature>
<feature type="helix" evidence="5">
    <location>
        <begin position="96"/>
        <end position="109"/>
    </location>
</feature>
<feature type="turn" evidence="5">
    <location>
        <begin position="111"/>
        <end position="113"/>
    </location>
</feature>
<feature type="strand" evidence="5">
    <location>
        <begin position="117"/>
        <end position="122"/>
    </location>
</feature>
<feature type="turn" evidence="5">
    <location>
        <begin position="125"/>
        <end position="127"/>
    </location>
</feature>
<feature type="strand" evidence="5">
    <location>
        <begin position="129"/>
        <end position="133"/>
    </location>
</feature>
<feature type="helix" evidence="5">
    <location>
        <begin position="135"/>
        <end position="137"/>
    </location>
</feature>
<feature type="strand" evidence="5">
    <location>
        <begin position="143"/>
        <end position="148"/>
    </location>
</feature>
<feature type="turn" evidence="5">
    <location>
        <begin position="149"/>
        <end position="153"/>
    </location>
</feature>
<feature type="strand" evidence="5">
    <location>
        <begin position="154"/>
        <end position="156"/>
    </location>
</feature>
<feature type="helix" evidence="5">
    <location>
        <begin position="157"/>
        <end position="160"/>
    </location>
</feature>
<feature type="helix" evidence="5">
    <location>
        <begin position="168"/>
        <end position="185"/>
    </location>
</feature>
<feature type="strand" evidence="5">
    <location>
        <begin position="186"/>
        <end position="188"/>
    </location>
</feature>
<feature type="strand" evidence="5">
    <location>
        <begin position="193"/>
        <end position="198"/>
    </location>
</feature>
<feature type="strand" evidence="5">
    <location>
        <begin position="203"/>
        <end position="208"/>
    </location>
</feature>
<feature type="turn" evidence="5">
    <location>
        <begin position="210"/>
        <end position="212"/>
    </location>
</feature>
<comment type="function">
    <text evidence="1">The proteasome is a multicatalytic proteinase complex which is characterized by its ability to cleave peptides with Arg, Phe, Tyr, Leu, and Glu adjacent to the leaving group at neutral or slightly basic pH. The proteasome has an ATP-dependent proteolytic activity. This subunit is involved in antigen processing to generate class I binding peptides (By similarity).</text>
</comment>
<comment type="catalytic activity">
    <reaction>
        <text>Cleavage of peptide bonds with very broad specificity.</text>
        <dbReference type="EC" id="3.4.25.1"/>
    </reaction>
</comment>
<comment type="subunit">
    <text>The 26S proteasome consists of a 20S proteasome core and two 19S regulatory subunits. The 20S proteasome core is composed of 28 subunits that are arranged in four stacked rings, resulting in a barrel-shaped structure. The two end rings are each formed by seven alpha subunits, and the two central rings are each formed by seven beta subunits. The catalytic chamber with the active sites is on the inside of the barrel. Component of the immunoproteasome, where it displaces the equivalent housekeeping subunit PSMB6. Component of the spermatoproteasome, a form of the proteasome specifically found in testis.</text>
</comment>
<comment type="subcellular location">
    <subcellularLocation>
        <location evidence="4">Cytoplasm</location>
    </subcellularLocation>
    <subcellularLocation>
        <location evidence="1">Nucleus</location>
    </subcellularLocation>
</comment>
<comment type="induction">
    <text>Up-regulated by interferon gamma (at protein level).</text>
</comment>
<comment type="PTM">
    <text evidence="2">Autocleaved. The resulting N-terminal Thr residue of the mature subunit is responsible for the nucleophile proteolytic activity.</text>
</comment>
<comment type="miscellaneous">
    <text>Encoded in the MHC class II region.</text>
</comment>
<comment type="similarity">
    <text evidence="4">Belongs to the peptidase T1B family.</text>
</comment>
<evidence type="ECO:0000250" key="1"/>
<evidence type="ECO:0000250" key="2">
    <source>
        <dbReference type="UniProtKB" id="O35955"/>
    </source>
</evidence>
<evidence type="ECO:0000250" key="3">
    <source>
        <dbReference type="UniProtKB" id="P28065"/>
    </source>
</evidence>
<evidence type="ECO:0000255" key="4">
    <source>
        <dbReference type="PROSITE-ProRule" id="PRU00809"/>
    </source>
</evidence>
<evidence type="ECO:0007829" key="5">
    <source>
        <dbReference type="PDB" id="7DR7"/>
    </source>
</evidence>
<proteinExistence type="evidence at protein level"/>
<name>PSB9_BOVIN</name>